<organism>
    <name type="scientific">Escherichia coli O157:H7 (strain EC4115 / EHEC)</name>
    <dbReference type="NCBI Taxonomy" id="444450"/>
    <lineage>
        <taxon>Bacteria</taxon>
        <taxon>Pseudomonadati</taxon>
        <taxon>Pseudomonadota</taxon>
        <taxon>Gammaproteobacteria</taxon>
        <taxon>Enterobacterales</taxon>
        <taxon>Enterobacteriaceae</taxon>
        <taxon>Escherichia</taxon>
    </lineage>
</organism>
<dbReference type="EMBL" id="CP001164">
    <property type="protein sequence ID" value="ACI34643.1"/>
    <property type="molecule type" value="Genomic_DNA"/>
</dbReference>
<dbReference type="RefSeq" id="WP_001296943.1">
    <property type="nucleotide sequence ID" value="NC_011353.1"/>
</dbReference>
<dbReference type="SMR" id="B5Z476"/>
<dbReference type="GeneID" id="93775796"/>
<dbReference type="KEGG" id="ecf:ECH74115_2354"/>
<dbReference type="HOGENOM" id="CLU_083287_18_2_6"/>
<dbReference type="GO" id="GO:0003677">
    <property type="term" value="F:DNA binding"/>
    <property type="evidence" value="ECO:0007669"/>
    <property type="project" value="UniProtKB-UniRule"/>
</dbReference>
<dbReference type="GO" id="GO:0003700">
    <property type="term" value="F:DNA-binding transcription factor activity"/>
    <property type="evidence" value="ECO:0007669"/>
    <property type="project" value="UniProtKB-UniRule"/>
</dbReference>
<dbReference type="GO" id="GO:0006950">
    <property type="term" value="P:response to stress"/>
    <property type="evidence" value="ECO:0007669"/>
    <property type="project" value="TreeGrafter"/>
</dbReference>
<dbReference type="FunFam" id="1.10.10.10:FF:000261">
    <property type="entry name" value="Transcriptional regulator SlyA"/>
    <property type="match status" value="1"/>
</dbReference>
<dbReference type="Gene3D" id="1.10.10.10">
    <property type="entry name" value="Winged helix-like DNA-binding domain superfamily/Winged helix DNA-binding domain"/>
    <property type="match status" value="1"/>
</dbReference>
<dbReference type="HAMAP" id="MF_01819">
    <property type="entry name" value="HTH_type_SlyA"/>
    <property type="match status" value="1"/>
</dbReference>
<dbReference type="InterPro" id="IPR000835">
    <property type="entry name" value="HTH_MarR-typ"/>
</dbReference>
<dbReference type="InterPro" id="IPR039422">
    <property type="entry name" value="MarR/SlyA-like"/>
</dbReference>
<dbReference type="InterPro" id="IPR023187">
    <property type="entry name" value="Tscrpt_reg_MarR-type_CS"/>
</dbReference>
<dbReference type="InterPro" id="IPR023071">
    <property type="entry name" value="Tscrpt_reg_SlyA"/>
</dbReference>
<dbReference type="InterPro" id="IPR036388">
    <property type="entry name" value="WH-like_DNA-bd_sf"/>
</dbReference>
<dbReference type="InterPro" id="IPR036390">
    <property type="entry name" value="WH_DNA-bd_sf"/>
</dbReference>
<dbReference type="NCBIfam" id="NF002926">
    <property type="entry name" value="PRK03573.1"/>
    <property type="match status" value="1"/>
</dbReference>
<dbReference type="PANTHER" id="PTHR33164:SF64">
    <property type="entry name" value="TRANSCRIPTIONAL REGULATOR SLYA"/>
    <property type="match status" value="1"/>
</dbReference>
<dbReference type="PANTHER" id="PTHR33164">
    <property type="entry name" value="TRANSCRIPTIONAL REGULATOR, MARR FAMILY"/>
    <property type="match status" value="1"/>
</dbReference>
<dbReference type="Pfam" id="PF01047">
    <property type="entry name" value="MarR"/>
    <property type="match status" value="1"/>
</dbReference>
<dbReference type="PRINTS" id="PR00598">
    <property type="entry name" value="HTHMARR"/>
</dbReference>
<dbReference type="SMART" id="SM00347">
    <property type="entry name" value="HTH_MARR"/>
    <property type="match status" value="1"/>
</dbReference>
<dbReference type="SUPFAM" id="SSF46785">
    <property type="entry name" value="Winged helix' DNA-binding domain"/>
    <property type="match status" value="1"/>
</dbReference>
<dbReference type="PROSITE" id="PS01117">
    <property type="entry name" value="HTH_MARR_1"/>
    <property type="match status" value="1"/>
</dbReference>
<dbReference type="PROSITE" id="PS50995">
    <property type="entry name" value="HTH_MARR_2"/>
    <property type="match status" value="1"/>
</dbReference>
<accession>B5Z476</accession>
<proteinExistence type="inferred from homology"/>
<gene>
    <name evidence="1" type="primary">slyA</name>
    <name type="ordered locus">ECH74115_2354</name>
</gene>
<reference key="1">
    <citation type="journal article" date="2011" name="Proc. Natl. Acad. Sci. U.S.A.">
        <title>Genomic anatomy of Escherichia coli O157:H7 outbreaks.</title>
        <authorList>
            <person name="Eppinger M."/>
            <person name="Mammel M.K."/>
            <person name="Leclerc J.E."/>
            <person name="Ravel J."/>
            <person name="Cebula T.A."/>
        </authorList>
    </citation>
    <scope>NUCLEOTIDE SEQUENCE [LARGE SCALE GENOMIC DNA]</scope>
    <source>
        <strain>EC4115 / EHEC</strain>
    </source>
</reference>
<name>SLYA_ECO5E</name>
<evidence type="ECO:0000255" key="1">
    <source>
        <dbReference type="HAMAP-Rule" id="MF_01819"/>
    </source>
</evidence>
<sequence>MESPLGSDLARLVRIWRALIDHRLKPLELTQTHWVTLHNIHQLPPDQSQIQLAKAIGIEQPSLVRTLDQLEEKGLISRQTCASDRRAKRIKLTEKAEPLISEMEAVINKTRAEILHGISAEELEQLITLIAKLEHNIIELQAKG</sequence>
<feature type="chain" id="PRO_1000188008" description="Transcriptional regulator SlyA">
    <location>
        <begin position="1"/>
        <end position="144"/>
    </location>
</feature>
<feature type="domain" description="HTH marR-type" evidence="1">
    <location>
        <begin position="2"/>
        <end position="135"/>
    </location>
</feature>
<feature type="DNA-binding region" description="H-T-H motif" evidence="1">
    <location>
        <begin position="49"/>
        <end position="72"/>
    </location>
</feature>
<protein>
    <recommendedName>
        <fullName evidence="1">Transcriptional regulator SlyA</fullName>
    </recommendedName>
</protein>
<comment type="function">
    <text evidence="1">Transcription regulator that can specifically activate or repress expression of target genes.</text>
</comment>
<comment type="subunit">
    <text evidence="1">Homodimer.</text>
</comment>
<comment type="similarity">
    <text evidence="1">Belongs to the SlyA family.</text>
</comment>
<keyword id="KW-0010">Activator</keyword>
<keyword id="KW-0238">DNA-binding</keyword>
<keyword id="KW-0678">Repressor</keyword>
<keyword id="KW-0804">Transcription</keyword>
<keyword id="KW-0805">Transcription regulation</keyword>